<organism>
    <name type="scientific">Escherichia coli O6:H1 (strain CFT073 / ATCC 700928 / UPEC)</name>
    <dbReference type="NCBI Taxonomy" id="199310"/>
    <lineage>
        <taxon>Bacteria</taxon>
        <taxon>Pseudomonadati</taxon>
        <taxon>Pseudomonadota</taxon>
        <taxon>Gammaproteobacteria</taxon>
        <taxon>Enterobacterales</taxon>
        <taxon>Enterobacteriaceae</taxon>
        <taxon>Escherichia</taxon>
    </lineage>
</organism>
<comment type="function">
    <text evidence="1">Involved in the biogenesis of the F1C fimbriae.</text>
</comment>
<comment type="subcellular location">
    <subcellularLocation>
        <location evidence="1">Periplasm</location>
    </subcellularLocation>
</comment>
<comment type="similarity">
    <text evidence="3">Belongs to the periplasmic pilus chaperone family.</text>
</comment>
<comment type="sequence caution" evidence="3">
    <conflict type="erroneous initiation">
        <sequence resource="EMBL-CDS" id="AAN79698"/>
    </conflict>
</comment>
<keyword id="KW-0143">Chaperone</keyword>
<keyword id="KW-1029">Fimbrium biogenesis</keyword>
<keyword id="KW-0393">Immunoglobulin domain</keyword>
<keyword id="KW-0574">Periplasm</keyword>
<keyword id="KW-1185">Reference proteome</keyword>
<keyword id="KW-0732">Signal</keyword>
<accession>P62610</accession>
<accession>P46008</accession>
<protein>
    <recommendedName>
        <fullName>Chaperone protein FocC</fullName>
    </recommendedName>
</protein>
<feature type="signal peptide" evidence="2">
    <location>
        <begin position="1"/>
        <end position="21"/>
    </location>
</feature>
<feature type="chain" id="PRO_0000009278" description="Chaperone protein FocC">
    <location>
        <begin position="22"/>
        <end position="227"/>
    </location>
</feature>
<reference key="1">
    <citation type="journal article" date="2002" name="Proc. Natl. Acad. Sci. U.S.A.">
        <title>Extensive mosaic structure revealed by the complete genome sequence of uropathogenic Escherichia coli.</title>
        <authorList>
            <person name="Welch R.A."/>
            <person name="Burland V."/>
            <person name="Plunkett G. III"/>
            <person name="Redford P."/>
            <person name="Roesch P."/>
            <person name="Rasko D."/>
            <person name="Buckles E.L."/>
            <person name="Liou S.-R."/>
            <person name="Boutin A."/>
            <person name="Hackett J."/>
            <person name="Stroud D."/>
            <person name="Mayhew G.F."/>
            <person name="Rose D.J."/>
            <person name="Zhou S."/>
            <person name="Schwartz D.C."/>
            <person name="Perna N.T."/>
            <person name="Mobley H.L.T."/>
            <person name="Donnenberg M.S."/>
            <person name="Blattner F.R."/>
        </authorList>
    </citation>
    <scope>NUCLEOTIDE SEQUENCE [LARGE SCALE GENOMIC DNA]</scope>
    <source>
        <strain>CFT073 / ATCC 700928 / UPEC</strain>
    </source>
</reference>
<proteinExistence type="inferred from homology"/>
<sequence length="227" mass="25199">MRIWAVLASFLVFFYIPQSYAGVALGATRVIYPEGQKQVQLAVTNNDDKSSYLIQSWIENAEGKKDARFVITPPLFSMQGKKENTLRIIDATNGQMPEDRESLFWVNVKAIPAMDKAKTGENYLQFAIVSRIKLLYRPQGLVIPPEQAPGKLEFTRENGGLTLFNPTPYYLTVTDLKAGNKSLENTMVPPQGKVTVNIPGGYTGGDITYKTINDYGALTEQVKGVVK</sequence>
<name>FOCC_ECOL6</name>
<evidence type="ECO:0000250" key="1"/>
<evidence type="ECO:0000255" key="2"/>
<evidence type="ECO:0000305" key="3"/>
<dbReference type="EMBL" id="AE014075">
    <property type="protein sequence ID" value="AAN79698.1"/>
    <property type="status" value="ALT_INIT"/>
    <property type="molecule type" value="Genomic_DNA"/>
</dbReference>
<dbReference type="SMR" id="P62610"/>
<dbReference type="STRING" id="199310.c1241"/>
<dbReference type="KEGG" id="ecc:c1241"/>
<dbReference type="eggNOG" id="COG3121">
    <property type="taxonomic scope" value="Bacteria"/>
</dbReference>
<dbReference type="HOGENOM" id="CLU_070768_2_1_6"/>
<dbReference type="Proteomes" id="UP000001410">
    <property type="component" value="Chromosome"/>
</dbReference>
<dbReference type="GO" id="GO:0030288">
    <property type="term" value="C:outer membrane-bounded periplasmic space"/>
    <property type="evidence" value="ECO:0007669"/>
    <property type="project" value="InterPro"/>
</dbReference>
<dbReference type="GO" id="GO:0071555">
    <property type="term" value="P:cell wall organization"/>
    <property type="evidence" value="ECO:0007669"/>
    <property type="project" value="InterPro"/>
</dbReference>
<dbReference type="GO" id="GO:0061077">
    <property type="term" value="P:chaperone-mediated protein folding"/>
    <property type="evidence" value="ECO:0007669"/>
    <property type="project" value="InterPro"/>
</dbReference>
<dbReference type="FunFam" id="2.60.40.10:FF:000458">
    <property type="entry name" value="Molecular chaperone FimC"/>
    <property type="match status" value="1"/>
</dbReference>
<dbReference type="Gene3D" id="2.60.40.10">
    <property type="entry name" value="Immunoglobulins"/>
    <property type="match status" value="2"/>
</dbReference>
<dbReference type="InterPro" id="IPR013783">
    <property type="entry name" value="Ig-like_fold"/>
</dbReference>
<dbReference type="InterPro" id="IPR008962">
    <property type="entry name" value="PapD-like_sf"/>
</dbReference>
<dbReference type="InterPro" id="IPR050643">
    <property type="entry name" value="Periplasmic_pilus_chap"/>
</dbReference>
<dbReference type="InterPro" id="IPR036316">
    <property type="entry name" value="Pili_assmbl_chap_C_dom_sf"/>
</dbReference>
<dbReference type="InterPro" id="IPR001829">
    <property type="entry name" value="Pili_assmbl_chaperone_bac"/>
</dbReference>
<dbReference type="InterPro" id="IPR016148">
    <property type="entry name" value="Pili_assmbl_chaperone_C"/>
</dbReference>
<dbReference type="InterPro" id="IPR018046">
    <property type="entry name" value="Pili_assmbl_chaperone_CS"/>
</dbReference>
<dbReference type="InterPro" id="IPR016147">
    <property type="entry name" value="Pili_assmbl_chaperone_N"/>
</dbReference>
<dbReference type="PANTHER" id="PTHR30251:SF11">
    <property type="entry name" value="CHAPERONE PROTEIN FIMC-RELATED"/>
    <property type="match status" value="1"/>
</dbReference>
<dbReference type="PANTHER" id="PTHR30251">
    <property type="entry name" value="PILUS ASSEMBLY CHAPERONE"/>
    <property type="match status" value="1"/>
</dbReference>
<dbReference type="Pfam" id="PF02753">
    <property type="entry name" value="PapD_C"/>
    <property type="match status" value="1"/>
</dbReference>
<dbReference type="Pfam" id="PF00345">
    <property type="entry name" value="PapD_N"/>
    <property type="match status" value="1"/>
</dbReference>
<dbReference type="PRINTS" id="PR00969">
    <property type="entry name" value="CHAPERONPILI"/>
</dbReference>
<dbReference type="SUPFAM" id="SSF49354">
    <property type="entry name" value="PapD-like"/>
    <property type="match status" value="1"/>
</dbReference>
<dbReference type="SUPFAM" id="SSF49584">
    <property type="entry name" value="Periplasmic chaperone C-domain"/>
    <property type="match status" value="1"/>
</dbReference>
<dbReference type="PROSITE" id="PS00635">
    <property type="entry name" value="PILI_CHAPERONE"/>
    <property type="match status" value="1"/>
</dbReference>
<gene>
    <name type="primary">focC</name>
    <name type="ordered locus">c1241</name>
</gene>